<evidence type="ECO:0000255" key="1"/>
<evidence type="ECO:0000256" key="2">
    <source>
        <dbReference type="SAM" id="MobiDB-lite"/>
    </source>
</evidence>
<evidence type="ECO:0000269" key="3">
    <source>
    </source>
</evidence>
<evidence type="ECO:0000303" key="4">
    <source>
    </source>
</evidence>
<evidence type="ECO:0000305" key="5"/>
<evidence type="ECO:0007744" key="6">
    <source>
    </source>
</evidence>
<evidence type="ECO:0007744" key="7">
    <source>
    </source>
</evidence>
<evidence type="ECO:0007744" key="8">
    <source>
    </source>
</evidence>
<evidence type="ECO:0007744" key="9">
    <source>
    </source>
</evidence>
<evidence type="ECO:0007744" key="10">
    <source>
    </source>
</evidence>
<evidence type="ECO:0007744" key="11">
    <source>
    </source>
</evidence>
<evidence type="ECO:0007829" key="12">
    <source>
        <dbReference type="PDB" id="6ID0"/>
    </source>
</evidence>
<evidence type="ECO:0007829" key="13">
    <source>
        <dbReference type="PDB" id="6ID1"/>
    </source>
</evidence>
<reference key="1">
    <citation type="journal article" date="2006" name="Nature">
        <title>Human chromosome 11 DNA sequence and analysis including novel gene identification.</title>
        <authorList>
            <person name="Taylor T.D."/>
            <person name="Noguchi H."/>
            <person name="Totoki Y."/>
            <person name="Toyoda A."/>
            <person name="Kuroki Y."/>
            <person name="Dewar K."/>
            <person name="Lloyd C."/>
            <person name="Itoh T."/>
            <person name="Takeda T."/>
            <person name="Kim D.-W."/>
            <person name="She X."/>
            <person name="Barlow K.F."/>
            <person name="Bloom T."/>
            <person name="Bruford E."/>
            <person name="Chang J.L."/>
            <person name="Cuomo C.A."/>
            <person name="Eichler E."/>
            <person name="FitzGerald M.G."/>
            <person name="Jaffe D.B."/>
            <person name="LaButti K."/>
            <person name="Nicol R."/>
            <person name="Park H.-S."/>
            <person name="Seaman C."/>
            <person name="Sougnez C."/>
            <person name="Yang X."/>
            <person name="Zimmer A.R."/>
            <person name="Zody M.C."/>
            <person name="Birren B.W."/>
            <person name="Nusbaum C."/>
            <person name="Fujiyama A."/>
            <person name="Hattori M."/>
            <person name="Rogers J."/>
            <person name="Lander E.S."/>
            <person name="Sakaki Y."/>
        </authorList>
    </citation>
    <scope>NUCLEOTIDE SEQUENCE [LARGE SCALE GENOMIC DNA]</scope>
</reference>
<reference key="2">
    <citation type="journal article" date="2004" name="Nat. Genet.">
        <title>Complete sequencing and characterization of 21,243 full-length human cDNAs.</title>
        <authorList>
            <person name="Ota T."/>
            <person name="Suzuki Y."/>
            <person name="Nishikawa T."/>
            <person name="Otsuki T."/>
            <person name="Sugiyama T."/>
            <person name="Irie R."/>
            <person name="Wakamatsu A."/>
            <person name="Hayashi K."/>
            <person name="Sato H."/>
            <person name="Nagai K."/>
            <person name="Kimura K."/>
            <person name="Makita H."/>
            <person name="Sekine M."/>
            <person name="Obayashi M."/>
            <person name="Nishi T."/>
            <person name="Shibahara T."/>
            <person name="Tanaka T."/>
            <person name="Ishii S."/>
            <person name="Yamamoto J."/>
            <person name="Saito K."/>
            <person name="Kawai Y."/>
            <person name="Isono Y."/>
            <person name="Nakamura Y."/>
            <person name="Nagahari K."/>
            <person name="Murakami K."/>
            <person name="Yasuda T."/>
            <person name="Iwayanagi T."/>
            <person name="Wagatsuma M."/>
            <person name="Shiratori A."/>
            <person name="Sudo H."/>
            <person name="Hosoiri T."/>
            <person name="Kaku Y."/>
            <person name="Kodaira H."/>
            <person name="Kondo H."/>
            <person name="Sugawara M."/>
            <person name="Takahashi M."/>
            <person name="Kanda K."/>
            <person name="Yokoi T."/>
            <person name="Furuya T."/>
            <person name="Kikkawa E."/>
            <person name="Omura Y."/>
            <person name="Abe K."/>
            <person name="Kamihara K."/>
            <person name="Katsuta N."/>
            <person name="Sato K."/>
            <person name="Tanikawa M."/>
            <person name="Yamazaki M."/>
            <person name="Ninomiya K."/>
            <person name="Ishibashi T."/>
            <person name="Yamashita H."/>
            <person name="Murakawa K."/>
            <person name="Fujimori K."/>
            <person name="Tanai H."/>
            <person name="Kimata M."/>
            <person name="Watanabe M."/>
            <person name="Hiraoka S."/>
            <person name="Chiba Y."/>
            <person name="Ishida S."/>
            <person name="Ono Y."/>
            <person name="Takiguchi S."/>
            <person name="Watanabe S."/>
            <person name="Yosida M."/>
            <person name="Hotuta T."/>
            <person name="Kusano J."/>
            <person name="Kanehori K."/>
            <person name="Takahashi-Fujii A."/>
            <person name="Hara H."/>
            <person name="Tanase T.-O."/>
            <person name="Nomura Y."/>
            <person name="Togiya S."/>
            <person name="Komai F."/>
            <person name="Hara R."/>
            <person name="Takeuchi K."/>
            <person name="Arita M."/>
            <person name="Imose N."/>
            <person name="Musashino K."/>
            <person name="Yuuki H."/>
            <person name="Oshima A."/>
            <person name="Sasaki N."/>
            <person name="Aotsuka S."/>
            <person name="Yoshikawa Y."/>
            <person name="Matsunawa H."/>
            <person name="Ichihara T."/>
            <person name="Shiohata N."/>
            <person name="Sano S."/>
            <person name="Moriya S."/>
            <person name="Momiyama H."/>
            <person name="Satoh N."/>
            <person name="Takami S."/>
            <person name="Terashima Y."/>
            <person name="Suzuki O."/>
            <person name="Nakagawa S."/>
            <person name="Senoh A."/>
            <person name="Mizoguchi H."/>
            <person name="Goto Y."/>
            <person name="Shimizu F."/>
            <person name="Wakebe H."/>
            <person name="Hishigaki H."/>
            <person name="Watanabe T."/>
            <person name="Sugiyama A."/>
            <person name="Takemoto M."/>
            <person name="Kawakami B."/>
            <person name="Yamazaki M."/>
            <person name="Watanabe K."/>
            <person name="Kumagai A."/>
            <person name="Itakura S."/>
            <person name="Fukuzumi Y."/>
            <person name="Fujimori Y."/>
            <person name="Komiyama M."/>
            <person name="Tashiro H."/>
            <person name="Tanigami A."/>
            <person name="Fujiwara T."/>
            <person name="Ono T."/>
            <person name="Yamada K."/>
            <person name="Fujii Y."/>
            <person name="Ozaki K."/>
            <person name="Hirao M."/>
            <person name="Ohmori Y."/>
            <person name="Kawabata A."/>
            <person name="Hikiji T."/>
            <person name="Kobatake N."/>
            <person name="Inagaki H."/>
            <person name="Ikema Y."/>
            <person name="Okamoto S."/>
            <person name="Okitani R."/>
            <person name="Kawakami T."/>
            <person name="Noguchi S."/>
            <person name="Itoh T."/>
            <person name="Shigeta K."/>
            <person name="Senba T."/>
            <person name="Matsumura K."/>
            <person name="Nakajima Y."/>
            <person name="Mizuno T."/>
            <person name="Morinaga M."/>
            <person name="Sasaki M."/>
            <person name="Togashi T."/>
            <person name="Oyama M."/>
            <person name="Hata H."/>
            <person name="Watanabe M."/>
            <person name="Komatsu T."/>
            <person name="Mizushima-Sugano J."/>
            <person name="Satoh T."/>
            <person name="Shirai Y."/>
            <person name="Takahashi Y."/>
            <person name="Nakagawa K."/>
            <person name="Okumura K."/>
            <person name="Nagase T."/>
            <person name="Nomura N."/>
            <person name="Kikuchi H."/>
            <person name="Masuho Y."/>
            <person name="Yamashita R."/>
            <person name="Nakai K."/>
            <person name="Yada T."/>
            <person name="Nakamura Y."/>
            <person name="Ohara O."/>
            <person name="Isogai T."/>
            <person name="Sugano S."/>
        </authorList>
    </citation>
    <scope>NUCLEOTIDE SEQUENCE [LARGE SCALE MRNA] OF 13-894 (ISOFORM 1)</scope>
    <source>
        <tissue>Prostate</tissue>
        <tissue>Trachea</tissue>
    </source>
</reference>
<reference key="3">
    <citation type="journal article" date="2004" name="Genome Res.">
        <title>The status, quality, and expansion of the NIH full-length cDNA project: the Mammalian Gene Collection (MGC).</title>
        <authorList>
            <consortium name="The MGC Project Team"/>
        </authorList>
    </citation>
    <scope>NUCLEOTIDE SEQUENCE [LARGE SCALE MRNA] OF 119-894 (ISOFORM 1)</scope>
    <scope>NUCLEOTIDE SEQUENCE [LARGE SCALE MRNA] OF 120-894 (ISOFORMS 2 AND 3)</scope>
    <scope>VARIANTS TYR-443 AND CYS-894</scope>
</reference>
<reference key="4">
    <citation type="journal article" date="2006" name="Cell">
        <title>Global, in vivo, and site-specific phosphorylation dynamics in signaling networks.</title>
        <authorList>
            <person name="Olsen J.V."/>
            <person name="Blagoev B."/>
            <person name="Gnad F."/>
            <person name="Macek B."/>
            <person name="Kumar C."/>
            <person name="Mortensen P."/>
            <person name="Mann M."/>
        </authorList>
    </citation>
    <scope>PHOSPHORYLATION [LARGE SCALE ANALYSIS] AT SER-479</scope>
    <scope>IDENTIFICATION BY MASS SPECTROMETRY [LARGE SCALE ANALYSIS]</scope>
    <source>
        <tissue>Cervix carcinoma</tissue>
    </source>
</reference>
<reference key="5">
    <citation type="journal article" date="2008" name="Proc. Natl. Acad. Sci. U.S.A.">
        <title>A quantitative atlas of mitotic phosphorylation.</title>
        <authorList>
            <person name="Dephoure N."/>
            <person name="Zhou C."/>
            <person name="Villen J."/>
            <person name="Beausoleil S.A."/>
            <person name="Bakalarski C.E."/>
            <person name="Elledge S.J."/>
            <person name="Gygi S.P."/>
        </authorList>
    </citation>
    <scope>IDENTIFICATION BY MASS SPECTROMETRY [LARGE SCALE ANALYSIS]</scope>
    <source>
        <tissue>Cervix carcinoma</tissue>
    </source>
</reference>
<reference key="6">
    <citation type="journal article" date="2009" name="Sci. Signal.">
        <title>Quantitative phosphoproteomic analysis of T cell receptor signaling reveals system-wide modulation of protein-protein interactions.</title>
        <authorList>
            <person name="Mayya V."/>
            <person name="Lundgren D.H."/>
            <person name="Hwang S.-I."/>
            <person name="Rezaul K."/>
            <person name="Wu L."/>
            <person name="Eng J.K."/>
            <person name="Rodionov V."/>
            <person name="Han D.K."/>
        </authorList>
    </citation>
    <scope>PHOSPHORYLATION [LARGE SCALE ANALYSIS] AT SER-479</scope>
    <scope>IDENTIFICATION BY MASS SPECTROMETRY [LARGE SCALE ANALYSIS]</scope>
    <source>
        <tissue>Leukemic T-cell</tissue>
    </source>
</reference>
<reference key="7">
    <citation type="journal article" date="2011" name="BMC Syst. Biol.">
        <title>Initial characterization of the human central proteome.</title>
        <authorList>
            <person name="Burkard T.R."/>
            <person name="Planyavsky M."/>
            <person name="Kaupe I."/>
            <person name="Breitwieser F.P."/>
            <person name="Buerckstuemmer T."/>
            <person name="Bennett K.L."/>
            <person name="Superti-Furga G."/>
            <person name="Colinge J."/>
        </authorList>
    </citation>
    <scope>IDENTIFICATION BY MASS SPECTROMETRY [LARGE SCALE ANALYSIS]</scope>
</reference>
<reference key="8">
    <citation type="journal article" date="2011" name="Sci. Signal.">
        <title>System-wide temporal characterization of the proteome and phosphoproteome of human embryonic stem cell differentiation.</title>
        <authorList>
            <person name="Rigbolt K.T."/>
            <person name="Prokhorova T.A."/>
            <person name="Akimov V."/>
            <person name="Henningsen J."/>
            <person name="Johansen P.T."/>
            <person name="Kratchmarova I."/>
            <person name="Kassem M."/>
            <person name="Mann M."/>
            <person name="Olsen J.V."/>
            <person name="Blagoev B."/>
        </authorList>
    </citation>
    <scope>PHOSPHORYLATION [LARGE SCALE ANALYSIS] AT SER-484</scope>
    <scope>IDENTIFICATION BY MASS SPECTROMETRY [LARGE SCALE ANALYSIS]</scope>
</reference>
<reference key="9">
    <citation type="journal article" date="2013" name="J. Proteome Res.">
        <title>Toward a comprehensive characterization of a human cancer cell phosphoproteome.</title>
        <authorList>
            <person name="Zhou H."/>
            <person name="Di Palma S."/>
            <person name="Preisinger C."/>
            <person name="Peng M."/>
            <person name="Polat A.N."/>
            <person name="Heck A.J."/>
            <person name="Mohammed S."/>
        </authorList>
    </citation>
    <scope>PHOSPHORYLATION [LARGE SCALE ANALYSIS] AT SER-75; SER-360; SER-372 AND SER-479</scope>
    <scope>IDENTIFICATION BY MASS SPECTROMETRY [LARGE SCALE ANALYSIS]</scope>
    <source>
        <tissue>Cervix carcinoma</tissue>
        <tissue>Erythroleukemia</tissue>
    </source>
</reference>
<reference key="10">
    <citation type="journal article" date="2015" name="Cell Rep.">
        <title>SUMO-2 orchestrates chromatin modifiers in response to DNA damage.</title>
        <authorList>
            <person name="Hendriks I.A."/>
            <person name="Treffers L.W."/>
            <person name="Verlaan-de Vries M."/>
            <person name="Olsen J.V."/>
            <person name="Vertegaal A.C."/>
        </authorList>
    </citation>
    <scope>SUMOYLATION [LARGE SCALE ANALYSIS] AT LYS-604</scope>
    <scope>IDENTIFICATION BY MASS SPECTROMETRY [LARGE SCALE ANALYSIS]</scope>
</reference>
<reference key="11">
    <citation type="journal article" date="2017" name="Nat. Struct. Mol. Biol.">
        <title>Site-specific mapping of the human SUMO proteome reveals co-modification with phosphorylation.</title>
        <authorList>
            <person name="Hendriks I.A."/>
            <person name="Lyon D."/>
            <person name="Young C."/>
            <person name="Jensen L.J."/>
            <person name="Vertegaal A.C."/>
            <person name="Nielsen M.L."/>
        </authorList>
    </citation>
    <scope>SUMOYLATION [LARGE SCALE ANALYSIS] AT LYS-171 AND LYS-604</scope>
    <scope>IDENTIFICATION BY MASS SPECTROMETRY [LARGE SCALE ANALYSIS]</scope>
</reference>
<gene>
    <name type="primary">CWF19L2</name>
</gene>
<keyword id="KW-0002">3D-structure</keyword>
<keyword id="KW-0025">Alternative splicing</keyword>
<keyword id="KW-0175">Coiled coil</keyword>
<keyword id="KW-1017">Isopeptide bond</keyword>
<keyword id="KW-0597">Phosphoprotein</keyword>
<keyword id="KW-1267">Proteomics identification</keyword>
<keyword id="KW-1185">Reference proteome</keyword>
<keyword id="KW-0832">Ubl conjugation</keyword>
<proteinExistence type="evidence at protein level"/>
<sequence length="894" mass="103787">MATSMAAASGRFESAKSIEERKEQTRNARAEVLRQAKANFEKEERRKELKRLRGEDTWMLPDVNERIEQFSQEHSVKKKKKKDKHSKKAKKEKKKKSKKQKYEKNNESSDSSSSSEDEWVEAVPSQTPDKEKAWKVKDEKSGKDDTQIIKRDEWMTVDFMSVKTVSSSSLKAEKETMRKIEQEKNQALEQSKLMERELNPYWKDGGTGLPPEDCSVSSITKVSVVEDGGLSWLRKSYLRMKEQAEKQSRNFEDIVAERYGSMEIFQSKLEDAEKAASTKEDYRRERWRKPTYSDKAQNCQESRESDLVKYGNSSRDRYATTDTAKNSNNEKFIGDEKDKRPGSLETCRRESNPRQNQEFSFGNLRAKFLRPSDDEELSFHSKGRKFEPLSSSSALVAQGSLCSGFRKPTKNSEERLTSWSRSDGRGDKKHSNQKPSETSTDEHQHVPEDPREKSQDEVLRDDPPKKEHLRDTKSTFAGSPERESIHILSVDEKNKLGAKIIKAEMMGNMELAEQLKVQLEKANKFKETITQIPKKSGVENEDQQEVILVRTDQSGRVWPVNTPGKSLESQGGRRKRQMVSTHEERERVRYFHDDDNLSLNDLVKNEKMGTAENQNKLFMRMASKFMGKTDGDYYTLDDMFVSKAAERERLGEEEENQRKKAIAEHRSLAAQMEKCLYCFDSSQFPKHLIVAIGVKVYLCLPNVRSLTEGHCLIVPLQHHRAATLLDEDIWEEIQMFRKSLVKMFEDKGLDCIFLETNMSMKKQYHMVYECIPLPKEVGDMAPIYFKKAIMESDEEWSMNKKLIDLSSKDIRKSVPRGLPYFSVDFGLHGGFAHVIEDQHKFPHYFGKEIIGGMLDIEPRLWRKGIRESFEDQRKKALQFAQWWKPYDFTKSKNY</sequence>
<organism>
    <name type="scientific">Homo sapiens</name>
    <name type="common">Human</name>
    <dbReference type="NCBI Taxonomy" id="9606"/>
    <lineage>
        <taxon>Eukaryota</taxon>
        <taxon>Metazoa</taxon>
        <taxon>Chordata</taxon>
        <taxon>Craniata</taxon>
        <taxon>Vertebrata</taxon>
        <taxon>Euteleostomi</taxon>
        <taxon>Mammalia</taxon>
        <taxon>Eutheria</taxon>
        <taxon>Euarchontoglires</taxon>
        <taxon>Primates</taxon>
        <taxon>Haplorrhini</taxon>
        <taxon>Catarrhini</taxon>
        <taxon>Hominidae</taxon>
        <taxon>Homo</taxon>
    </lineage>
</organism>
<accession>Q2TBE0</accession>
<accession>A4FU66</accession>
<accession>A4FU67</accession>
<accession>A4FU68</accession>
<accession>A8KAD6</accession>
<accession>Q6PHW1</accession>
<accession>Q96MI1</accession>
<feature type="chain" id="PRO_0000315648" description="CWF19-like protein 2">
    <location>
        <begin position="1"/>
        <end position="894"/>
    </location>
</feature>
<feature type="region of interest" description="Disordered" evidence="2">
    <location>
        <begin position="1"/>
        <end position="147"/>
    </location>
</feature>
<feature type="region of interest" description="Disordered" evidence="2">
    <location>
        <begin position="270"/>
        <end position="483"/>
    </location>
</feature>
<feature type="region of interest" description="Disordered" evidence="2">
    <location>
        <begin position="561"/>
        <end position="583"/>
    </location>
</feature>
<feature type="coiled-coil region" evidence="1">
    <location>
        <begin position="13"/>
        <end position="107"/>
    </location>
</feature>
<feature type="coiled-coil region" evidence="1">
    <location>
        <begin position="166"/>
        <end position="281"/>
    </location>
</feature>
<feature type="coiled-coil region" evidence="1">
    <location>
        <begin position="502"/>
        <end position="530"/>
    </location>
</feature>
<feature type="coiled-coil region" evidence="1">
    <location>
        <begin position="644"/>
        <end position="675"/>
    </location>
</feature>
<feature type="compositionally biased region" description="Basic and acidic residues" evidence="2">
    <location>
        <begin position="13"/>
        <end position="56"/>
    </location>
</feature>
<feature type="compositionally biased region" description="Basic residues" evidence="2">
    <location>
        <begin position="76"/>
        <end position="99"/>
    </location>
</feature>
<feature type="compositionally biased region" description="Basic and acidic residues" evidence="2">
    <location>
        <begin position="128"/>
        <end position="147"/>
    </location>
</feature>
<feature type="compositionally biased region" description="Basic and acidic residues" evidence="2">
    <location>
        <begin position="270"/>
        <end position="284"/>
    </location>
</feature>
<feature type="compositionally biased region" description="Polar residues" evidence="2">
    <location>
        <begin position="320"/>
        <end position="330"/>
    </location>
</feature>
<feature type="compositionally biased region" description="Basic and acidic residues" evidence="2">
    <location>
        <begin position="332"/>
        <end position="352"/>
    </location>
</feature>
<feature type="compositionally biased region" description="Basic and acidic residues" evidence="2">
    <location>
        <begin position="410"/>
        <end position="430"/>
    </location>
</feature>
<feature type="compositionally biased region" description="Basic and acidic residues" evidence="2">
    <location>
        <begin position="440"/>
        <end position="473"/>
    </location>
</feature>
<feature type="modified residue" description="Phosphoserine" evidence="9">
    <location>
        <position position="75"/>
    </location>
</feature>
<feature type="modified residue" description="Phosphoserine" evidence="9">
    <location>
        <position position="360"/>
    </location>
</feature>
<feature type="modified residue" description="Phosphoserine" evidence="9">
    <location>
        <position position="372"/>
    </location>
</feature>
<feature type="modified residue" description="Phosphoserine" evidence="6 7 9">
    <location>
        <position position="479"/>
    </location>
</feature>
<feature type="modified residue" description="Phosphoserine" evidence="8">
    <location>
        <position position="484"/>
    </location>
</feature>
<feature type="cross-link" description="Glycyl lysine isopeptide (Lys-Gly) (interchain with G-Cter in SUMO2)" evidence="11">
    <location>
        <position position="171"/>
    </location>
</feature>
<feature type="cross-link" description="Glycyl lysine isopeptide (Lys-Gly) (interchain with G-Cter in SUMO2)" evidence="10 11">
    <location>
        <position position="604"/>
    </location>
</feature>
<feature type="splice variant" id="VSP_030590" description="In isoform 3." evidence="4">
    <original>FMGKTDGDYYTLDDMFVSKAAERERLGEEEENQRKKAIAEHRSLAAQM</original>
    <variation>QLRENVLVKRKRTKGKKLLLSIGVLLHKWKNVCIVLTALNFPSILLLQ</variation>
    <location>
        <begin position="625"/>
        <end position="672"/>
    </location>
</feature>
<feature type="splice variant" id="VSP_030591" description="In isoform 3." evidence="4">
    <location>
        <begin position="673"/>
        <end position="894"/>
    </location>
</feature>
<feature type="splice variant" id="VSP_030592" description="In isoform 2." evidence="4">
    <original>MFRKSLVK</original>
    <variation>IKSRTVIQ</variation>
    <location>
        <begin position="735"/>
        <end position="742"/>
    </location>
</feature>
<feature type="splice variant" id="VSP_030593" description="In isoform 2." evidence="4">
    <location>
        <begin position="743"/>
        <end position="894"/>
    </location>
</feature>
<feature type="sequence variant" id="VAR_038268" description="In dbSNP:rs608634.">
    <original>P</original>
    <variation>T</variation>
    <location>
        <position position="210"/>
    </location>
</feature>
<feature type="sequence variant" id="VAR_038269" description="In dbSNP:rs659040." evidence="3">
    <original>H</original>
    <variation>Y</variation>
    <location>
        <position position="443"/>
    </location>
</feature>
<feature type="sequence variant" id="VAR_038270" description="In dbSNP:rs35968518.">
    <original>H</original>
    <variation>Q</variation>
    <location>
        <position position="445"/>
    </location>
</feature>
<feature type="sequence variant" id="VAR_038271" description="In dbSNP:rs17106909.">
    <original>G</original>
    <variation>R</variation>
    <location>
        <position position="537"/>
    </location>
</feature>
<feature type="sequence variant" id="VAR_038272" description="In dbSNP:rs3758911." evidence="3">
    <original>Y</original>
    <variation>C</variation>
    <location>
        <position position="894"/>
    </location>
</feature>
<feature type="sequence conflict" description="In Ref. 3; AAI10443." evidence="5" ref="3">
    <original>E</original>
    <variation>K</variation>
    <location>
        <position position="584"/>
    </location>
</feature>
<feature type="sequence conflict" description="In Ref. 3; AAH56241." evidence="5" ref="3">
    <original>M</original>
    <variation>G</variation>
    <location>
        <position position="626"/>
    </location>
</feature>
<feature type="sequence conflict" description="In Ref. 2; BAF85690." evidence="5" ref="2">
    <original>P</original>
    <variation>L</variation>
    <location>
        <position position="819"/>
    </location>
</feature>
<feature type="strand" evidence="13">
    <location>
        <begin position="549"/>
        <end position="551"/>
    </location>
</feature>
<feature type="strand" evidence="13">
    <location>
        <begin position="557"/>
        <end position="559"/>
    </location>
</feature>
<feature type="strand" evidence="13">
    <location>
        <begin position="582"/>
        <end position="587"/>
    </location>
</feature>
<feature type="turn" evidence="13">
    <location>
        <begin position="592"/>
        <end position="596"/>
    </location>
</feature>
<feature type="helix" evidence="13">
    <location>
        <begin position="599"/>
        <end position="608"/>
    </location>
</feature>
<feature type="helix" evidence="13">
    <location>
        <begin position="615"/>
        <end position="621"/>
    </location>
</feature>
<feature type="strand" evidence="12">
    <location>
        <begin position="623"/>
        <end position="625"/>
    </location>
</feature>
<feature type="strand" evidence="13">
    <location>
        <begin position="631"/>
        <end position="634"/>
    </location>
</feature>
<feature type="helix" evidence="13">
    <location>
        <begin position="637"/>
        <end position="642"/>
    </location>
</feature>
<feature type="strand" evidence="13">
    <location>
        <begin position="648"/>
        <end position="650"/>
    </location>
</feature>
<feature type="helix" evidence="13">
    <location>
        <begin position="651"/>
        <end position="660"/>
    </location>
</feature>
<feature type="helix" evidence="13">
    <location>
        <begin position="662"/>
        <end position="673"/>
    </location>
</feature>
<feature type="strand" evidence="13">
    <location>
        <begin position="676"/>
        <end position="683"/>
    </location>
</feature>
<feature type="strand" evidence="12">
    <location>
        <begin position="686"/>
        <end position="688"/>
    </location>
</feature>
<feature type="strand" evidence="13">
    <location>
        <begin position="694"/>
        <end position="699"/>
    </location>
</feature>
<feature type="strand" evidence="13">
    <location>
        <begin position="702"/>
        <end position="704"/>
    </location>
</feature>
<feature type="strand" evidence="13">
    <location>
        <begin position="711"/>
        <end position="717"/>
    </location>
</feature>
<feature type="helix" evidence="13">
    <location>
        <begin position="727"/>
        <end position="746"/>
    </location>
</feature>
<feature type="strand" evidence="13">
    <location>
        <begin position="753"/>
        <end position="756"/>
    </location>
</feature>
<feature type="strand" evidence="13">
    <location>
        <begin position="768"/>
        <end position="770"/>
    </location>
</feature>
<feature type="helix" evidence="13">
    <location>
        <begin position="775"/>
        <end position="778"/>
    </location>
</feature>
<feature type="helix" evidence="13">
    <location>
        <begin position="781"/>
        <end position="790"/>
    </location>
</feature>
<feature type="strand" evidence="13">
    <location>
        <begin position="806"/>
        <end position="808"/>
    </location>
</feature>
<feature type="turn" evidence="13">
    <location>
        <begin position="811"/>
        <end position="813"/>
    </location>
</feature>
<feature type="strand" evidence="13">
    <location>
        <begin position="821"/>
        <end position="825"/>
    </location>
</feature>
<feature type="strand" evidence="13">
    <location>
        <begin position="828"/>
        <end position="833"/>
    </location>
</feature>
<feature type="helix" evidence="13">
    <location>
        <begin position="846"/>
        <end position="853"/>
    </location>
</feature>
<feature type="turn" evidence="13">
    <location>
        <begin position="858"/>
        <end position="861"/>
    </location>
</feature>
<feature type="turn" evidence="13">
    <location>
        <begin position="869"/>
        <end position="875"/>
    </location>
</feature>
<feature type="helix" evidence="13">
    <location>
        <begin position="876"/>
        <end position="882"/>
    </location>
</feature>
<comment type="interaction">
    <interactant intactId="EBI-5453285">
        <id>Q2TBE0</id>
    </interactant>
    <interactant intactId="EBI-11961672">
        <id>O94929-2</id>
        <label>ABLIM3</label>
    </interactant>
    <organismsDiffer>false</organismsDiffer>
    <experiments>3</experiments>
</comment>
<comment type="interaction">
    <interactant intactId="EBI-5453285">
        <id>Q2TBE0</id>
    </interactant>
    <interactant intactId="EBI-702390">
        <id>Q9UBB4</id>
        <label>ATXN10</label>
    </interactant>
    <organismsDiffer>false</organismsDiffer>
    <experiments>3</experiments>
</comment>
<comment type="interaction">
    <interactant intactId="EBI-5453285">
        <id>Q2TBE0</id>
    </interactant>
    <interactant intactId="EBI-4400025">
        <id>Q9Y2T1</id>
        <label>AXIN2</label>
    </interactant>
    <organismsDiffer>false</organismsDiffer>
    <experiments>3</experiments>
</comment>
<comment type="interaction">
    <interactant intactId="EBI-5453285">
        <id>Q2TBE0</id>
    </interactant>
    <interactant intactId="EBI-1642333">
        <id>Q9BYV9</id>
        <label>BACH2</label>
    </interactant>
    <organismsDiffer>false</organismsDiffer>
    <experiments>3</experiments>
</comment>
<comment type="interaction">
    <interactant intactId="EBI-5453285">
        <id>Q2TBE0</id>
    </interactant>
    <interactant intactId="EBI-749920">
        <id>Q9P1Z2</id>
        <label>CALCOCO1</label>
    </interactant>
    <organismsDiffer>false</organismsDiffer>
    <experiments>6</experiments>
</comment>
<comment type="interaction">
    <interactant intactId="EBI-5453285">
        <id>Q2TBE0</id>
    </interactant>
    <interactant intactId="EBI-739580">
        <id>Q13137</id>
        <label>CALCOCO2</label>
    </interactant>
    <organismsDiffer>false</organismsDiffer>
    <experiments>3</experiments>
</comment>
<comment type="interaction">
    <interactant intactId="EBI-5453285">
        <id>Q2TBE0</id>
    </interactant>
    <interactant intactId="EBI-3866279">
        <id>Q9BWT7</id>
        <label>CARD10</label>
    </interactant>
    <organismsDiffer>false</organismsDiffer>
    <experiments>3</experiments>
</comment>
<comment type="interaction">
    <interactant intactId="EBI-5453285">
        <id>Q2TBE0</id>
    </interactant>
    <interactant intactId="EBI-751319">
        <id>Q9H257</id>
        <label>CARD9</label>
    </interactant>
    <organismsDiffer>false</organismsDiffer>
    <experiments>3</experiments>
</comment>
<comment type="interaction">
    <interactant intactId="EBI-5453285">
        <id>Q2TBE0</id>
    </interactant>
    <interactant intactId="EBI-11530605">
        <id>Q9H257-2</id>
        <label>CARD9</label>
    </interactant>
    <organismsDiffer>false</organismsDiffer>
    <experiments>3</experiments>
</comment>
<comment type="interaction">
    <interactant intactId="EBI-5453285">
        <id>Q2TBE0</id>
    </interactant>
    <interactant intactId="EBI-10171570">
        <id>Q68D86</id>
        <label>CCDC102B</label>
    </interactant>
    <organismsDiffer>false</organismsDiffer>
    <experiments>3</experiments>
</comment>
<comment type="interaction">
    <interactant intactId="EBI-5453285">
        <id>Q2TBE0</id>
    </interactant>
    <interactant intactId="EBI-10171416">
        <id>Q96JN2-2</id>
        <label>CCDC136</label>
    </interactant>
    <organismsDiffer>false</organismsDiffer>
    <experiments>3</experiments>
</comment>
<comment type="interaction">
    <interactant intactId="EBI-5453285">
        <id>Q2TBE0</id>
    </interactant>
    <interactant intactId="EBI-2808286">
        <id>Q2TAC2</id>
        <label>CCDC57</label>
    </interactant>
    <organismsDiffer>false</organismsDiffer>
    <experiments>3</experiments>
</comment>
<comment type="interaction">
    <interactant intactId="EBI-5453285">
        <id>Q2TBE0</id>
    </interactant>
    <interactant intactId="EBI-347573">
        <id>A6NC98</id>
        <label>CCDC88B</label>
    </interactant>
    <organismsDiffer>false</organismsDiffer>
    <experiments>3</experiments>
</comment>
<comment type="interaction">
    <interactant intactId="EBI-5453285">
        <id>Q2TBE0</id>
    </interactant>
    <interactant intactId="EBI-11522539">
        <id>Q96MT8-3</id>
        <label>CEP63</label>
    </interactant>
    <organismsDiffer>false</organismsDiffer>
    <experiments>3</experiments>
</comment>
<comment type="interaction">
    <interactant intactId="EBI-5453285">
        <id>Q2TBE0</id>
    </interactant>
    <interactant intactId="EBI-739624">
        <id>Q8NHQ1</id>
        <label>CEP70</label>
    </interactant>
    <organismsDiffer>false</organismsDiffer>
    <experiments>3</experiments>
</comment>
<comment type="interaction">
    <interactant intactId="EBI-5453285">
        <id>Q2TBE0</id>
    </interactant>
    <interactant intactId="EBI-742887">
        <id>Q8TAP6</id>
        <label>CEP76</label>
    </interactant>
    <organismsDiffer>false</organismsDiffer>
    <experiments>3</experiments>
</comment>
<comment type="interaction">
    <interactant intactId="EBI-5453285">
        <id>Q2TBE0</id>
    </interactant>
    <interactant intactId="EBI-742422">
        <id>Q96M91</id>
        <label>CFAP53</label>
    </interactant>
    <organismsDiffer>false</organismsDiffer>
    <experiments>3</experiments>
</comment>
<comment type="interaction">
    <interactant intactId="EBI-5453285">
        <id>Q2TBE0</id>
    </interactant>
    <interactant intactId="EBI-947360">
        <id>Q8N137</id>
        <label>CNTROB</label>
    </interactant>
    <organismsDiffer>false</organismsDiffer>
    <experiments>3</experiments>
</comment>
<comment type="interaction">
    <interactant intactId="EBI-5453285">
        <id>Q2TBE0</id>
    </interactant>
    <interactant intactId="EBI-719164">
        <id>Q69YN2</id>
        <label>CWF19L1</label>
    </interactant>
    <organismsDiffer>false</organismsDiffer>
    <experiments>3</experiments>
</comment>
<comment type="interaction">
    <interactant intactId="EBI-5453285">
        <id>Q2TBE0</id>
    </interactant>
    <interactant intactId="EBI-1055572">
        <id>P17661</id>
        <label>DES</label>
    </interactant>
    <organismsDiffer>false</organismsDiffer>
    <experiments>3</experiments>
</comment>
<comment type="interaction">
    <interactant intactId="EBI-5453285">
        <id>Q2TBE0</id>
    </interactant>
    <interactant intactId="EBI-11988027">
        <id>Q9NRI5-2</id>
        <label>DISC1</label>
    </interactant>
    <organismsDiffer>false</organismsDiffer>
    <experiments>3</experiments>
</comment>
<comment type="interaction">
    <interactant intactId="EBI-5453285">
        <id>Q2TBE0</id>
    </interactant>
    <interactant intactId="EBI-742102">
        <id>Q8IYI6</id>
        <label>EXOC8</label>
    </interactant>
    <organismsDiffer>false</organismsDiffer>
    <experiments>3</experiments>
</comment>
<comment type="interaction">
    <interactant intactId="EBI-5453285">
        <id>Q2TBE0</id>
    </interactant>
    <interactant intactId="EBI-10175124">
        <id>Q8IZU0</id>
        <label>FAM9B</label>
    </interactant>
    <organismsDiffer>false</organismsDiffer>
    <experiments>3</experiments>
</comment>
<comment type="interaction">
    <interactant intactId="EBI-5453285">
        <id>Q2TBE0</id>
    </interactant>
    <interactant intactId="EBI-11977403">
        <id>A0A0C3SFZ9</id>
        <label>FCHO1</label>
    </interactant>
    <organismsDiffer>false</organismsDiffer>
    <experiments>3</experiments>
</comment>
<comment type="interaction">
    <interactant intactId="EBI-5453285">
        <id>Q2TBE0</id>
    </interactant>
    <interactant intactId="EBI-5661036">
        <id>A1L4K1</id>
        <label>FSD2</label>
    </interactant>
    <organismsDiffer>false</organismsDiffer>
    <experiments>3</experiments>
</comment>
<comment type="interaction">
    <interactant intactId="EBI-5453285">
        <id>Q2TBE0</id>
    </interactant>
    <interactant intactId="EBI-11022345">
        <id>P51114-2</id>
        <label>FXR1</label>
    </interactant>
    <organismsDiffer>false</organismsDiffer>
    <experiments>3</experiments>
</comment>
<comment type="interaction">
    <interactant intactId="EBI-5453285">
        <id>Q2TBE0</id>
    </interactant>
    <interactant intactId="EBI-740459">
        <id>P51116</id>
        <label>FXR2</label>
    </interactant>
    <organismsDiffer>false</organismsDiffer>
    <experiments>3</experiments>
</comment>
<comment type="interaction">
    <interactant intactId="EBI-5453285">
        <id>Q2TBE0</id>
    </interactant>
    <interactant intactId="EBI-1052570">
        <id>O95995</id>
        <label>GAS8</label>
    </interactant>
    <organismsDiffer>false</organismsDiffer>
    <experiments>3</experiments>
</comment>
<comment type="interaction">
    <interactant intactId="EBI-5453285">
        <id>Q2TBE0</id>
    </interactant>
    <interactant intactId="EBI-744302">
        <id>P14136</id>
        <label>GFAP</label>
    </interactant>
    <organismsDiffer>false</organismsDiffer>
    <experiments>6</experiments>
</comment>
<comment type="interaction">
    <interactant intactId="EBI-5453285">
        <id>Q2TBE0</id>
    </interactant>
    <interactant intactId="EBI-618309">
        <id>Q08379</id>
        <label>GOLGA2</label>
    </interactant>
    <organismsDiffer>false</organismsDiffer>
    <experiments>3</experiments>
</comment>
<comment type="interaction">
    <interactant intactId="EBI-5453285">
        <id>Q2TBE0</id>
    </interactant>
    <interactant intactId="EBI-5916454">
        <id>A6NEM1</id>
        <label>GOLGA6L9</label>
    </interactant>
    <organismsDiffer>false</organismsDiffer>
    <experiments>3</experiments>
</comment>
<comment type="interaction">
    <interactant intactId="EBI-5453285">
        <id>Q2TBE0</id>
    </interactant>
    <interactant intactId="EBI-717919">
        <id>Q4V328</id>
        <label>GRIPAP1</label>
    </interactant>
    <organismsDiffer>false</organismsDiffer>
    <experiments>3</experiments>
</comment>
<comment type="interaction">
    <interactant intactId="EBI-5453285">
        <id>Q2TBE0</id>
    </interactant>
    <interactant intactId="EBI-748420">
        <id>Q9NSC5</id>
        <label>HOMER3</label>
    </interactant>
    <organismsDiffer>false</organismsDiffer>
    <experiments>3</experiments>
</comment>
<comment type="interaction">
    <interactant intactId="EBI-5453285">
        <id>Q2TBE0</id>
    </interactant>
    <interactant intactId="EBI-746704">
        <id>Q9UJC3</id>
        <label>HOOK1</label>
    </interactant>
    <organismsDiffer>false</organismsDiffer>
    <experiments>3</experiments>
</comment>
<comment type="interaction">
    <interactant intactId="EBI-5453285">
        <id>Q2TBE0</id>
    </interactant>
    <interactant intactId="EBI-743290">
        <id>Q96ED9</id>
        <label>HOOK2</label>
    </interactant>
    <organismsDiffer>false</organismsDiffer>
    <experiments>3</experiments>
</comment>
<comment type="interaction">
    <interactant intactId="EBI-5453285">
        <id>Q2TBE0</id>
    </interactant>
    <interactant intactId="EBI-10961706">
        <id>Q96ED9-2</id>
        <label>HOOK2</label>
    </interactant>
    <organismsDiffer>false</organismsDiffer>
    <experiments>3</experiments>
</comment>
<comment type="interaction">
    <interactant intactId="EBI-5453285">
        <id>Q2TBE0</id>
    </interactant>
    <interactant intactId="EBI-7116203">
        <id>O75031</id>
        <label>HSF2BP</label>
    </interactant>
    <organismsDiffer>false</organismsDiffer>
    <experiments>3</experiments>
</comment>
<comment type="interaction">
    <interactant intactId="EBI-5453285">
        <id>Q2TBE0</id>
    </interactant>
    <interactant intactId="EBI-81279">
        <id>Q9Y6K9</id>
        <label>IKBKG</label>
    </interactant>
    <organismsDiffer>false</organismsDiffer>
    <experiments>3</experiments>
</comment>
<comment type="interaction">
    <interactant intactId="EBI-5453285">
        <id>Q2TBE0</id>
    </interactant>
    <interactant intactId="EBI-11522367">
        <id>Q13422-7</id>
        <label>IKZF1</label>
    </interactant>
    <organismsDiffer>false</organismsDiffer>
    <experiments>3</experiments>
</comment>
<comment type="interaction">
    <interactant intactId="EBI-5453285">
        <id>Q2TBE0</id>
    </interactant>
    <interactant intactId="EBI-1055254">
        <id>Q8WXH2</id>
        <label>JPH3</label>
    </interactant>
    <organismsDiffer>false</organismsDiffer>
    <experiments>3</experiments>
</comment>
<comment type="interaction">
    <interactant intactId="EBI-5453285">
        <id>Q2TBE0</id>
    </interactant>
    <interactant intactId="EBI-2556193">
        <id>Q63ZY3</id>
        <label>KANK2</label>
    </interactant>
    <organismsDiffer>false</organismsDiffer>
    <experiments>3</experiments>
</comment>
<comment type="interaction">
    <interactant intactId="EBI-5453285">
        <id>Q2TBE0</id>
    </interactant>
    <interactant intactId="EBI-749265">
        <id>Q8N6L0</id>
        <label>KASH5</label>
    </interactant>
    <organismsDiffer>false</organismsDiffer>
    <experiments>3</experiments>
</comment>
<comment type="interaction">
    <interactant intactId="EBI-5453285">
        <id>Q2TBE0</id>
    </interactant>
    <interactant intactId="EBI-10213781">
        <id>Q5T7B8-2</id>
        <label>KIF24</label>
    </interactant>
    <organismsDiffer>false</organismsDiffer>
    <experiments>3</experiments>
</comment>
<comment type="interaction">
    <interactant intactId="EBI-5453285">
        <id>Q2TBE0</id>
    </interactant>
    <interactant intactId="EBI-14069005">
        <id>Q9BVG8-5</id>
        <label>KIFC3</label>
    </interactant>
    <organismsDiffer>false</organismsDiffer>
    <experiments>3</experiments>
</comment>
<comment type="interaction">
    <interactant intactId="EBI-5453285">
        <id>Q2TBE0</id>
    </interactant>
    <interactant intactId="EBI-10171697">
        <id>Q6A162</id>
        <label>KRT40</label>
    </interactant>
    <organismsDiffer>false</organismsDiffer>
    <experiments>3</experiments>
</comment>
<comment type="interaction">
    <interactant intactId="EBI-5453285">
        <id>Q2TBE0</id>
    </interactant>
    <interactant intactId="EBI-12039345">
        <id>Q9UBR4-2</id>
        <label>LHX3</label>
    </interactant>
    <organismsDiffer>false</organismsDiffer>
    <experiments>3</experiments>
</comment>
<comment type="interaction">
    <interactant intactId="EBI-5453285">
        <id>Q2TBE0</id>
    </interactant>
    <interactant intactId="EBI-10175218">
        <id>Q9NQ69</id>
        <label>LHX9</label>
    </interactant>
    <organismsDiffer>false</organismsDiffer>
    <experiments>3</experiments>
</comment>
<comment type="interaction">
    <interactant intactId="EBI-5453285">
        <id>Q2TBE0</id>
    </interactant>
    <interactant intactId="EBI-12864460">
        <id>P48059-3</id>
        <label>LIMS1</label>
    </interactant>
    <organismsDiffer>false</organismsDiffer>
    <experiments>3</experiments>
</comment>
<comment type="interaction">
    <interactant intactId="EBI-5453285">
        <id>Q2TBE0</id>
    </interactant>
    <interactant intactId="EBI-1216080">
        <id>Q9Y250</id>
        <label>LZTS1</label>
    </interactant>
    <organismsDiffer>false</organismsDiffer>
    <experiments>3</experiments>
</comment>
<comment type="interaction">
    <interactant intactId="EBI-5453285">
        <id>Q2TBE0</id>
    </interactant>
    <interactant intactId="EBI-741037">
        <id>Q9BRK4</id>
        <label>LZTS2</label>
    </interactant>
    <organismsDiffer>false</organismsDiffer>
    <experiments>3</experiments>
</comment>
<comment type="interaction">
    <interactant intactId="EBI-5453285">
        <id>Q2TBE0</id>
    </interactant>
    <interactant intactId="EBI-748182">
        <id>Q8TC57</id>
        <label>M1AP</label>
    </interactant>
    <organismsDiffer>false</organismsDiffer>
    <experiments>3</experiments>
</comment>
<comment type="interaction">
    <interactant intactId="EBI-5453285">
        <id>Q2TBE0</id>
    </interactant>
    <interactant intactId="EBI-742610">
        <id>Q9Y6D9</id>
        <label>MAD1L1</label>
    </interactant>
    <organismsDiffer>false</organismsDiffer>
    <experiments>6</experiments>
</comment>
<comment type="interaction">
    <interactant intactId="EBI-5453285">
        <id>Q2TBE0</id>
    </interactant>
    <interactant intactId="EBI-2864512">
        <id>P50221</id>
        <label>MEOX1</label>
    </interactant>
    <organismsDiffer>false</organismsDiffer>
    <experiments>6</experiments>
</comment>
<comment type="interaction">
    <interactant intactId="EBI-5453285">
        <id>Q2TBE0</id>
    </interactant>
    <interactant intactId="EBI-742948">
        <id>Q5JR59</id>
        <label>MTUS2</label>
    </interactant>
    <organismsDiffer>false</organismsDiffer>
    <experiments>3</experiments>
</comment>
<comment type="interaction">
    <interactant intactId="EBI-5453285">
        <id>Q2TBE0</id>
    </interactant>
    <interactant intactId="EBI-11522433">
        <id>Q5JR59-3</id>
        <label>MTUS2</label>
    </interactant>
    <organismsDiffer>false</organismsDiffer>
    <experiments>3</experiments>
</comment>
<comment type="interaction">
    <interactant intactId="EBI-5453285">
        <id>Q2TBE0</id>
    </interactant>
    <interactant intactId="EBI-8641936">
        <id>Q15742</id>
        <label>NAB2</label>
    </interactant>
    <organismsDiffer>false</organismsDiffer>
    <experiments>6</experiments>
</comment>
<comment type="interaction">
    <interactant intactId="EBI-5453285">
        <id>Q2TBE0</id>
    </interactant>
    <interactant intactId="EBI-928842">
        <id>Q9GZM8</id>
        <label>NDEL1</label>
    </interactant>
    <organismsDiffer>false</organismsDiffer>
    <experiments>3</experiments>
</comment>
<comment type="interaction">
    <interactant intactId="EBI-5453285">
        <id>Q2TBE0</id>
    </interactant>
    <interactant intactId="EBI-9640281">
        <id>Q5VU43-2</id>
        <label>PDE4DIP</label>
    </interactant>
    <organismsDiffer>false</organismsDiffer>
    <experiments>3</experiments>
</comment>
<comment type="interaction">
    <interactant intactId="EBI-5453285">
        <id>Q2TBE0</id>
    </interactant>
    <interactant intactId="EBI-14066006">
        <id>Q4G0R1</id>
        <label>PIBF1</label>
    </interactant>
    <organismsDiffer>false</organismsDiffer>
    <experiments>3</experiments>
</comment>
<comment type="interaction">
    <interactant intactId="EBI-5453285">
        <id>Q2TBE0</id>
    </interactant>
    <interactant intactId="EBI-79165">
        <id>Q9NRD5</id>
        <label>PICK1</label>
    </interactant>
    <organismsDiffer>false</organismsDiffer>
    <experiments>3</experiments>
</comment>
<comment type="interaction">
    <interactant intactId="EBI-5453285">
        <id>Q2TBE0</id>
    </interactant>
    <interactant intactId="EBI-1050964">
        <id>O43586</id>
        <label>PSTPIP1</label>
    </interactant>
    <organismsDiffer>false</organismsDiffer>
    <experiments>3</experiments>
</comment>
<comment type="interaction">
    <interactant intactId="EBI-5453285">
        <id>Q2TBE0</id>
    </interactant>
    <interactant intactId="EBI-726876">
        <id>Q6NUQ1</id>
        <label>RINT1</label>
    </interactant>
    <organismsDiffer>false</organismsDiffer>
    <experiments>6</experiments>
</comment>
<comment type="interaction">
    <interactant intactId="EBI-5453285">
        <id>Q2TBE0</id>
    </interactant>
    <interactant intactId="EBI-348469">
        <id>Q15427</id>
        <label>SF3B4</label>
    </interactant>
    <organismsDiffer>false</organismsDiffer>
    <experiments>6</experiments>
</comment>
<comment type="interaction">
    <interactant intactId="EBI-5453285">
        <id>Q2TBE0</id>
    </interactant>
    <interactant intactId="EBI-632715">
        <id>Q13573</id>
        <label>SNW1</label>
    </interactant>
    <organismsDiffer>false</organismsDiffer>
    <experiments>5</experiments>
</comment>
<comment type="interaction">
    <interactant intactId="EBI-5453285">
        <id>Q2TBE0</id>
    </interactant>
    <interactant intactId="EBI-714135">
        <id>O75558</id>
        <label>STX11</label>
    </interactant>
    <organismsDiffer>false</organismsDiffer>
    <experiments>3</experiments>
</comment>
<comment type="interaction">
    <interactant intactId="EBI-5453285">
        <id>Q2TBE0</id>
    </interactant>
    <interactant intactId="EBI-529518">
        <id>Q86VP1</id>
        <label>TAX1BP1</label>
    </interactant>
    <organismsDiffer>false</organismsDiffer>
    <experiments>3</experiments>
</comment>
<comment type="interaction">
    <interactant intactId="EBI-5453285">
        <id>Q2TBE0</id>
    </interactant>
    <interactant intactId="EBI-1644036">
        <id>Q86TI0</id>
        <label>TBC1D1</label>
    </interactant>
    <organismsDiffer>false</organismsDiffer>
    <experiments>3</experiments>
</comment>
<comment type="interaction">
    <interactant intactId="EBI-5453285">
        <id>Q2TBE0</id>
    </interactant>
    <interactant intactId="EBI-1105213">
        <id>Q9UBB9</id>
        <label>TFIP11</label>
    </interactant>
    <organismsDiffer>false</organismsDiffer>
    <experiments>3</experiments>
</comment>
<comment type="interaction">
    <interactant intactId="EBI-5453285">
        <id>Q2TBE0</id>
    </interactant>
    <interactant intactId="EBI-10175039">
        <id>Q13625-3</id>
        <label>TP53BP2</label>
    </interactant>
    <organismsDiffer>false</organismsDiffer>
    <experiments>3</experiments>
</comment>
<comment type="interaction">
    <interactant intactId="EBI-5453285">
        <id>Q2TBE0</id>
    </interactant>
    <interactant intactId="EBI-355744">
        <id>Q12933</id>
        <label>TRAF2</label>
    </interactant>
    <organismsDiffer>false</organismsDiffer>
    <experiments>3</experiments>
</comment>
<comment type="interaction">
    <interactant intactId="EBI-5453285">
        <id>Q2TBE0</id>
    </interactant>
    <interactant intactId="EBI-740098">
        <id>P36406</id>
        <label>TRIM23</label>
    </interactant>
    <organismsDiffer>false</organismsDiffer>
    <experiments>3</experiments>
</comment>
<comment type="interaction">
    <interactant intactId="EBI-5453285">
        <id>Q2TBE0</id>
    </interactant>
    <interactant intactId="EBI-719493">
        <id>P14373</id>
        <label>TRIM27</label>
    </interactant>
    <organismsDiffer>false</organismsDiffer>
    <experiments>6</experiments>
</comment>
<comment type="interaction">
    <interactant intactId="EBI-5453285">
        <id>Q2TBE0</id>
    </interactant>
    <interactant intactId="EBI-741602">
        <id>O94972</id>
        <label>TRIM37</label>
    </interactant>
    <organismsDiffer>false</organismsDiffer>
    <experiments>6</experiments>
</comment>
<comment type="interaction">
    <interactant intactId="EBI-5453285">
        <id>Q2TBE0</id>
    </interactant>
    <interactant intactId="EBI-2130429">
        <id>Q9BYV2</id>
        <label>TRIM54</label>
    </interactant>
    <organismsDiffer>false</organismsDiffer>
    <experiments>6</experiments>
</comment>
<comment type="interaction">
    <interactant intactId="EBI-5453285">
        <id>Q2TBE0</id>
    </interactant>
    <interactant intactId="EBI-720828">
        <id>Q9C026</id>
        <label>TRIM9</label>
    </interactant>
    <organismsDiffer>false</organismsDiffer>
    <experiments>6</experiments>
</comment>
<comment type="interaction">
    <interactant intactId="EBI-5453285">
        <id>Q2TBE0</id>
    </interactant>
    <interactant intactId="EBI-353844">
        <id>P08670</id>
        <label>VIM</label>
    </interactant>
    <organismsDiffer>false</organismsDiffer>
    <experiments>3</experiments>
</comment>
<comment type="interaction">
    <interactant intactId="EBI-5453285">
        <id>Q2TBE0</id>
    </interactant>
    <interactant intactId="EBI-2799833">
        <id>Q8N1B4</id>
        <label>VPS52</label>
    </interactant>
    <organismsDiffer>false</organismsDiffer>
    <experiments>3</experiments>
</comment>
<comment type="interaction">
    <interactant intactId="EBI-5453285">
        <id>Q2TBE0</id>
    </interactant>
    <interactant intactId="EBI-742740">
        <id>Q96BR9</id>
        <label>ZBTB8A</label>
    </interactant>
    <organismsDiffer>false</organismsDiffer>
    <experiments>3</experiments>
</comment>
<comment type="interaction">
    <interactant intactId="EBI-5453285">
        <id>Q2TBE0</id>
    </interactant>
    <interactant intactId="EBI-12030590">
        <id>Q9H0C1</id>
        <label>ZMYND12</label>
    </interactant>
    <organismsDiffer>false</organismsDiffer>
    <experiments>3</experiments>
</comment>
<comment type="interaction">
    <interactant intactId="EBI-5453285">
        <id>Q2TBE0</id>
    </interactant>
    <interactant intactId="EBI-11041653">
        <id>P13682</id>
        <label>ZNF35</label>
    </interactant>
    <organismsDiffer>false</organismsDiffer>
    <experiments>3</experiments>
</comment>
<comment type="interaction">
    <interactant intactId="EBI-5453285">
        <id>Q2TBE0</id>
    </interactant>
    <interactant intactId="EBI-625509">
        <id>Q8N720</id>
        <label>ZNF655</label>
    </interactant>
    <organismsDiffer>false</organismsDiffer>
    <experiments>3</experiments>
</comment>
<comment type="interaction">
    <interactant intactId="EBI-5453285">
        <id>Q2TBE0</id>
    </interactant>
    <interactant intactId="EBI-527853">
        <id>Q9UGI0</id>
        <label>ZRANB1</label>
    </interactant>
    <organismsDiffer>false</organismsDiffer>
    <experiments>3</experiments>
</comment>
<comment type="alternative products">
    <event type="alternative splicing"/>
    <isoform>
        <id>Q2TBE0-1</id>
        <name>1</name>
        <sequence type="displayed"/>
    </isoform>
    <isoform>
        <id>Q2TBE0-2</id>
        <name>2</name>
        <sequence type="described" ref="VSP_030592 VSP_030593"/>
    </isoform>
    <isoform>
        <id>Q2TBE0-3</id>
        <name>3</name>
        <sequence type="described" ref="VSP_030590 VSP_030591"/>
    </isoform>
</comment>
<comment type="miscellaneous">
    <molecule>Isoform 2</molecule>
    <text evidence="5">May be produced at very low levels due to a premature stop codon in the mRNA, leading to nonsense-mediated mRNA decay.</text>
</comment>
<comment type="miscellaneous">
    <molecule>Isoform 3</molecule>
    <text evidence="5">May be produced at very low levels due to a premature stop codon in the mRNA, leading to nonsense-mediated mRNA decay.</text>
</comment>
<comment type="similarity">
    <text evidence="5">Belongs to the CWF19 family.</text>
</comment>
<comment type="caution">
    <text evidence="5">It is uncertain whether Met-1 or Met-5 is the initiator.</text>
</comment>
<comment type="sequence caution" evidence="5">
    <conflict type="erroneous initiation">
        <sequence resource="EMBL-CDS" id="AAI10440"/>
    </conflict>
    <text>Truncated N-terminus.</text>
</comment>
<comment type="sequence caution" evidence="5">
    <conflict type="erroneous initiation">
        <sequence resource="EMBL-CDS" id="AAI10441"/>
    </conflict>
    <text>Truncated N-terminus.</text>
</comment>
<comment type="sequence caution" evidence="5">
    <conflict type="frameshift">
        <sequence resource="EMBL-CDS" id="AAI10441"/>
    </conflict>
</comment>
<comment type="sequence caution" evidence="5">
    <conflict type="erroneous initiation">
        <sequence resource="EMBL-CDS" id="AAI10442"/>
    </conflict>
    <text>Truncated N-terminus.</text>
</comment>
<comment type="sequence caution" evidence="5">
    <conflict type="erroneous initiation">
        <sequence resource="EMBL-CDS" id="AAI10443"/>
    </conflict>
    <text>Truncated N-terminus.</text>
</comment>
<comment type="sequence caution" evidence="5">
    <conflict type="erroneous initiation">
        <sequence resource="EMBL-CDS" id="AAI18670"/>
    </conflict>
    <text>Truncated N-terminus.</text>
</comment>
<comment type="sequence caution" evidence="5">
    <conflict type="erroneous initiation">
        <sequence resource="EMBL-CDS" id="BAB71307"/>
    </conflict>
    <text>Truncated N-terminus.</text>
</comment>
<comment type="sequence caution" evidence="5">
    <conflict type="miscellaneous discrepancy">
        <sequence resource="EMBL-CDS" id="BAF85690"/>
    </conflict>
</comment>
<dbReference type="EMBL" id="AP000766">
    <property type="status" value="NOT_ANNOTATED_CDS"/>
    <property type="molecule type" value="Genomic_DNA"/>
</dbReference>
<dbReference type="EMBL" id="AP001823">
    <property type="status" value="NOT_ANNOTATED_CDS"/>
    <property type="molecule type" value="Genomic_DNA"/>
</dbReference>
<dbReference type="EMBL" id="AK056905">
    <property type="protein sequence ID" value="BAB71307.1"/>
    <property type="status" value="ALT_INIT"/>
    <property type="molecule type" value="mRNA"/>
</dbReference>
<dbReference type="EMBL" id="AK293001">
    <property type="protein sequence ID" value="BAF85690.1"/>
    <property type="status" value="ALT_SEQ"/>
    <property type="molecule type" value="mRNA"/>
</dbReference>
<dbReference type="EMBL" id="BC056241">
    <property type="protein sequence ID" value="AAH56241.1"/>
    <property type="molecule type" value="mRNA"/>
</dbReference>
<dbReference type="EMBL" id="BC110439">
    <property type="protein sequence ID" value="AAI10440.1"/>
    <property type="status" value="ALT_INIT"/>
    <property type="molecule type" value="mRNA"/>
</dbReference>
<dbReference type="EMBL" id="BC110440">
    <property type="protein sequence ID" value="AAI10441.1"/>
    <property type="status" value="ALT_SEQ"/>
    <property type="molecule type" value="mRNA"/>
</dbReference>
<dbReference type="EMBL" id="BC110441">
    <property type="protein sequence ID" value="AAI10442.1"/>
    <property type="status" value="ALT_INIT"/>
    <property type="molecule type" value="mRNA"/>
</dbReference>
<dbReference type="EMBL" id="BC110442">
    <property type="protein sequence ID" value="AAI10443.2"/>
    <property type="status" value="ALT_INIT"/>
    <property type="molecule type" value="mRNA"/>
</dbReference>
<dbReference type="EMBL" id="BC118669">
    <property type="protein sequence ID" value="AAI18670.1"/>
    <property type="status" value="ALT_INIT"/>
    <property type="molecule type" value="mRNA"/>
</dbReference>
<dbReference type="CCDS" id="CCDS8336.2">
    <molecule id="Q2TBE0-1"/>
</dbReference>
<dbReference type="RefSeq" id="NP_689647.2">
    <molecule id="Q2TBE0-1"/>
    <property type="nucleotide sequence ID" value="NM_152434.3"/>
</dbReference>
<dbReference type="PDB" id="6ID0">
    <property type="method" value="EM"/>
    <property type="resolution" value="2.90 A"/>
    <property type="chains" value="U=1-894"/>
</dbReference>
<dbReference type="PDB" id="6ID1">
    <property type="method" value="EM"/>
    <property type="resolution" value="2.86 A"/>
    <property type="chains" value="U=1-894"/>
</dbReference>
<dbReference type="PDB" id="8RO2">
    <property type="method" value="EM"/>
    <property type="resolution" value="3.50 A"/>
    <property type="chains" value="L2=1-894"/>
</dbReference>
<dbReference type="PDBsum" id="6ID0"/>
<dbReference type="PDBsum" id="6ID1"/>
<dbReference type="PDBsum" id="8RO2"/>
<dbReference type="EMDB" id="EMD-19399"/>
<dbReference type="EMDB" id="EMD-9646"/>
<dbReference type="EMDB" id="EMD-9647"/>
<dbReference type="SMR" id="Q2TBE0"/>
<dbReference type="BioGRID" id="126821">
    <property type="interactions" value="183"/>
</dbReference>
<dbReference type="FunCoup" id="Q2TBE0">
    <property type="interactions" value="3171"/>
</dbReference>
<dbReference type="IntAct" id="Q2TBE0">
    <property type="interactions" value="162"/>
</dbReference>
<dbReference type="STRING" id="9606.ENSP00000282251"/>
<dbReference type="GlyGen" id="Q2TBE0">
    <property type="glycosylation" value="1 site, 1 O-linked glycan (1 site)"/>
</dbReference>
<dbReference type="iPTMnet" id="Q2TBE0"/>
<dbReference type="PhosphoSitePlus" id="Q2TBE0"/>
<dbReference type="BioMuta" id="CWF19L2"/>
<dbReference type="DMDM" id="300669615"/>
<dbReference type="jPOST" id="Q2TBE0"/>
<dbReference type="MassIVE" id="Q2TBE0"/>
<dbReference type="PaxDb" id="9606-ENSP00000282251"/>
<dbReference type="PeptideAtlas" id="Q2TBE0"/>
<dbReference type="ProteomicsDB" id="61491">
    <molecule id="Q2TBE0-1"/>
</dbReference>
<dbReference type="ProteomicsDB" id="61492">
    <molecule id="Q2TBE0-2"/>
</dbReference>
<dbReference type="ProteomicsDB" id="61493">
    <molecule id="Q2TBE0-3"/>
</dbReference>
<dbReference type="Pumba" id="Q2TBE0"/>
<dbReference type="Antibodypedia" id="50383">
    <property type="antibodies" value="34 antibodies from 14 providers"/>
</dbReference>
<dbReference type="DNASU" id="143884"/>
<dbReference type="Ensembl" id="ENST00000282251.10">
    <molecule id="Q2TBE0-1"/>
    <property type="protein sequence ID" value="ENSP00000282251.5"/>
    <property type="gene ID" value="ENSG00000152404.16"/>
</dbReference>
<dbReference type="GeneID" id="143884"/>
<dbReference type="KEGG" id="hsa:143884"/>
<dbReference type="MANE-Select" id="ENST00000282251.10">
    <property type="protein sequence ID" value="ENSP00000282251.5"/>
    <property type="RefSeq nucleotide sequence ID" value="NM_152434.3"/>
    <property type="RefSeq protein sequence ID" value="NP_689647.2"/>
</dbReference>
<dbReference type="UCSC" id="uc010rvp.3">
    <molecule id="Q2TBE0-1"/>
    <property type="organism name" value="human"/>
</dbReference>
<dbReference type="AGR" id="HGNC:26508"/>
<dbReference type="CTD" id="143884"/>
<dbReference type="DisGeNET" id="143884"/>
<dbReference type="GeneCards" id="CWF19L2"/>
<dbReference type="HGNC" id="HGNC:26508">
    <property type="gene designation" value="CWF19L2"/>
</dbReference>
<dbReference type="HPA" id="ENSG00000152404">
    <property type="expression patterns" value="Low tissue specificity"/>
</dbReference>
<dbReference type="neXtProt" id="NX_Q2TBE0"/>
<dbReference type="OpenTargets" id="ENSG00000152404"/>
<dbReference type="PharmGKB" id="PA134914164"/>
<dbReference type="VEuPathDB" id="HostDB:ENSG00000152404"/>
<dbReference type="eggNOG" id="KOG2477">
    <property type="taxonomic scope" value="Eukaryota"/>
</dbReference>
<dbReference type="GeneTree" id="ENSGT00940000155627"/>
<dbReference type="HOGENOM" id="CLU_015540_0_0_1"/>
<dbReference type="InParanoid" id="Q2TBE0"/>
<dbReference type="OMA" id="FMKCLTR"/>
<dbReference type="OrthoDB" id="2113965at2759"/>
<dbReference type="PAN-GO" id="Q2TBE0">
    <property type="GO annotations" value="2 GO annotations based on evolutionary models"/>
</dbReference>
<dbReference type="PhylomeDB" id="Q2TBE0"/>
<dbReference type="TreeFam" id="TF351271"/>
<dbReference type="PathwayCommons" id="Q2TBE0"/>
<dbReference type="Reactome" id="R-HSA-72163">
    <property type="pathway name" value="mRNA Splicing - Major Pathway"/>
</dbReference>
<dbReference type="SignaLink" id="Q2TBE0"/>
<dbReference type="BioGRID-ORCS" id="143884">
    <property type="hits" value="452 hits in 1151 CRISPR screens"/>
</dbReference>
<dbReference type="ChiTaRS" id="CWF19L2">
    <property type="organism name" value="human"/>
</dbReference>
<dbReference type="GenomeRNAi" id="143884"/>
<dbReference type="Pharos" id="Q2TBE0">
    <property type="development level" value="Tdark"/>
</dbReference>
<dbReference type="PRO" id="PR:Q2TBE0"/>
<dbReference type="Proteomes" id="UP000005640">
    <property type="component" value="Chromosome 11"/>
</dbReference>
<dbReference type="RNAct" id="Q2TBE0">
    <property type="molecule type" value="protein"/>
</dbReference>
<dbReference type="Bgee" id="ENSG00000152404">
    <property type="expression patterns" value="Expressed in tendon of biceps brachii and 178 other cell types or tissues"/>
</dbReference>
<dbReference type="ExpressionAtlas" id="Q2TBE0">
    <property type="expression patterns" value="baseline and differential"/>
</dbReference>
<dbReference type="GO" id="GO:0005654">
    <property type="term" value="C:nucleoplasm"/>
    <property type="evidence" value="ECO:0000304"/>
    <property type="project" value="Reactome"/>
</dbReference>
<dbReference type="GO" id="GO:0071014">
    <property type="term" value="C:post-mRNA release spliceosomal complex"/>
    <property type="evidence" value="ECO:0000318"/>
    <property type="project" value="GO_Central"/>
</dbReference>
<dbReference type="GO" id="GO:0000398">
    <property type="term" value="P:mRNA splicing, via spliceosome"/>
    <property type="evidence" value="ECO:0000318"/>
    <property type="project" value="GO_Central"/>
</dbReference>
<dbReference type="FunFam" id="3.30.428.10:FF:000008">
    <property type="entry name" value="CWF19-like 2, cell cycle control"/>
    <property type="match status" value="1"/>
</dbReference>
<dbReference type="Gene3D" id="3.30.428.10">
    <property type="entry name" value="HIT-like"/>
    <property type="match status" value="1"/>
</dbReference>
<dbReference type="InterPro" id="IPR040194">
    <property type="entry name" value="Cwf19-like"/>
</dbReference>
<dbReference type="InterPro" id="IPR006768">
    <property type="entry name" value="Cwf19-like_C_dom-1"/>
</dbReference>
<dbReference type="InterPro" id="IPR006767">
    <property type="entry name" value="Cwf19-like_C_dom-2"/>
</dbReference>
<dbReference type="InterPro" id="IPR036265">
    <property type="entry name" value="HIT-like_sf"/>
</dbReference>
<dbReference type="PANTHER" id="PTHR12072">
    <property type="entry name" value="CWF19, CELL CYCLE CONTROL PROTEIN"/>
    <property type="match status" value="1"/>
</dbReference>
<dbReference type="PANTHER" id="PTHR12072:SF5">
    <property type="entry name" value="CWF19-LIKE PROTEIN 2"/>
    <property type="match status" value="1"/>
</dbReference>
<dbReference type="Pfam" id="PF04677">
    <property type="entry name" value="CwfJ_C_1"/>
    <property type="match status" value="1"/>
</dbReference>
<dbReference type="Pfam" id="PF04676">
    <property type="entry name" value="CwfJ_C_2"/>
    <property type="match status" value="1"/>
</dbReference>
<dbReference type="SUPFAM" id="SSF54197">
    <property type="entry name" value="HIT-like"/>
    <property type="match status" value="1"/>
</dbReference>
<name>C19L2_HUMAN</name>
<protein>
    <recommendedName>
        <fullName>CWF19-like protein 2</fullName>
    </recommendedName>
</protein>